<evidence type="ECO:0000250" key="1">
    <source>
        <dbReference type="UniProtKB" id="Q04371"/>
    </source>
</evidence>
<evidence type="ECO:0000250" key="2">
    <source>
        <dbReference type="UniProtKB" id="Q6AYT5"/>
    </source>
</evidence>
<evidence type="ECO:0000250" key="3">
    <source>
        <dbReference type="UniProtKB" id="Q9H993"/>
    </source>
</evidence>
<evidence type="ECO:0000303" key="4">
    <source>
    </source>
</evidence>
<evidence type="ECO:0000303" key="5">
    <source>
    </source>
</evidence>
<evidence type="ECO:0000305" key="6"/>
<sequence>MAESPAFLSAKDEGSFAYLTIKDRTPQILTKVIDTLHRHKSEFFEKHGEEGIEAEKKAISLLSKLRNELQTDKPITPLVDKCVDTHIWNQYLEYQRSLLNEGDGEPRWFFSPWLFVECYMYRRIHEAIMQSPPIHDFDVFKESKEENFFESQGSIDALCSHLLQLKPVKGLREEQIQDEFFKLLQISLWGNKCDLSLSGGESSSQKANIINCLQDLKPFILINDTESLWALLSKLKKTVETPVVRVDIVLDNSGFELITDLVLADFLFSSELATEIHFHGKSIPWFVSDVTEHDFNWIVEHMKSSNLESMSTCGACWEAYARMGRWAYHDHAFWTLPHPYCVMPQVAPDLYAELQKAHLILFKGDLNYRKLMGDRKWKFTFPFHQALSGFHPAPLCSIRTLKCELQVGLQPGQAEQLTASDPHWLTTGRYGILQFDGPL</sequence>
<proteinExistence type="evidence at protein level"/>
<name>ARMT1_MOUSE</name>
<comment type="function">
    <text evidence="1 3">Metal-dependent phosphatase that shows phosphatase activity against several substrates, including fructose-1-phosphate and fructose-6-phosphate (By similarity). Its preference for fructose-1-phosphate, a strong glycating agent that causes DNA damage rather than a canonical yeast metabolite, suggests a damage-control function in hexose phosphate metabolism (By similarity). Has also been shown to have O-methyltransferase activity that methylates glutamate residues of target proteins to form gamma-glutamyl methyl ester residues (By similarity). Possibly methylates PCNA, suggesting it is involved in the DNA damage response (By similarity).</text>
</comment>
<comment type="catalytic activity">
    <reaction evidence="1">
        <text>beta-D-fructose 1-phosphate + H2O = D-fructose + phosphate</text>
        <dbReference type="Rhea" id="RHEA:35603"/>
        <dbReference type="ChEBI" id="CHEBI:15377"/>
        <dbReference type="ChEBI" id="CHEBI:37721"/>
        <dbReference type="ChEBI" id="CHEBI:43474"/>
        <dbReference type="ChEBI" id="CHEBI:138881"/>
    </reaction>
</comment>
<comment type="catalytic activity">
    <reaction evidence="1">
        <text>beta-D-fructose 6-phosphate = dihydroxyacetone + D-glyceraldehyde 3-phosphate</text>
        <dbReference type="Rhea" id="RHEA:28002"/>
        <dbReference type="ChEBI" id="CHEBI:16016"/>
        <dbReference type="ChEBI" id="CHEBI:57634"/>
        <dbReference type="ChEBI" id="CHEBI:59776"/>
    </reaction>
</comment>
<comment type="catalytic activity">
    <reaction evidence="3">
        <text>L-glutamyl-[protein] + S-adenosyl-L-methionine = [protein]-L-glutamate 5-O-methyl ester + S-adenosyl-L-homocysteine</text>
        <dbReference type="Rhea" id="RHEA:24452"/>
        <dbReference type="Rhea" id="RHEA-COMP:10208"/>
        <dbReference type="Rhea" id="RHEA-COMP:10311"/>
        <dbReference type="ChEBI" id="CHEBI:29973"/>
        <dbReference type="ChEBI" id="CHEBI:57856"/>
        <dbReference type="ChEBI" id="CHEBI:59789"/>
        <dbReference type="ChEBI" id="CHEBI:82795"/>
    </reaction>
</comment>
<comment type="cofactor">
    <cofactor evidence="1">
        <name>Mn(2+)</name>
        <dbReference type="ChEBI" id="CHEBI:29035"/>
    </cofactor>
    <cofactor evidence="1">
        <name>Ni(2+)</name>
        <dbReference type="ChEBI" id="CHEBI:49786"/>
    </cofactor>
</comment>
<comment type="alternative products">
    <event type="alternative splicing"/>
    <isoform>
        <id>A6H630-1</id>
        <name>1</name>
        <sequence type="displayed"/>
    </isoform>
    <isoform>
        <id>A6H630-2</id>
        <name>2</name>
        <sequence type="described" ref="VSP_036138 VSP_036139"/>
    </isoform>
    <isoform>
        <id>A6H630-3</id>
        <name>3</name>
        <sequence type="described" ref="VSP_036133 VSP_036135 VSP_036136"/>
    </isoform>
    <isoform>
        <id>A6H630-4</id>
        <name>4</name>
        <sequence type="described" ref="VSP_036134 VSP_036137"/>
    </isoform>
</comment>
<comment type="domain">
    <text evidence="1">Subfamily III proteins have a conserved RTxK motif about 40-50 residues from the C-terminus; the threonine may be replaced by serine or cysteine.</text>
</comment>
<comment type="PTM">
    <text evidence="3">Automethylated.</text>
</comment>
<comment type="similarity">
    <text evidence="6">Belongs to the damage-control phosphatase family. Sugar phosphate phosphatase III subfamily.</text>
</comment>
<comment type="caution">
    <text evidence="3">Human C6orf211 has been reportedly associated with a protein carboxyl methyltransferase activity, but whether this protein indeed has such an activity remains to be determined (By similarity). It has been later shown to belong to a family of metal-dependent phosphatases implicated in metabolite damage-control (By similarity).</text>
</comment>
<dbReference type="EC" id="3.1.3.-" evidence="1"/>
<dbReference type="EC" id="2.1.1.-" evidence="3"/>
<dbReference type="EMBL" id="AK006776">
    <property type="protein sequence ID" value="BAB24735.1"/>
    <property type="molecule type" value="mRNA"/>
</dbReference>
<dbReference type="EMBL" id="AC133902">
    <property type="status" value="NOT_ANNOTATED_CDS"/>
    <property type="molecule type" value="Genomic_DNA"/>
</dbReference>
<dbReference type="EMBL" id="CH466562">
    <property type="protein sequence ID" value="EDL03585.1"/>
    <property type="molecule type" value="Genomic_DNA"/>
</dbReference>
<dbReference type="EMBL" id="CH466562">
    <property type="protein sequence ID" value="EDL03588.1"/>
    <property type="molecule type" value="Genomic_DNA"/>
</dbReference>
<dbReference type="EMBL" id="BC002139">
    <property type="protein sequence ID" value="AAH02139.1"/>
    <property type="molecule type" value="mRNA"/>
</dbReference>
<dbReference type="EMBL" id="BC099894">
    <property type="protein sequence ID" value="AAH99894.1"/>
    <property type="molecule type" value="mRNA"/>
</dbReference>
<dbReference type="EMBL" id="BC138908">
    <property type="protein sequence ID" value="AAI38909.1"/>
    <property type="molecule type" value="mRNA"/>
</dbReference>
<dbReference type="EMBL" id="BC145732">
    <property type="protein sequence ID" value="AAI45733.1"/>
    <property type="molecule type" value="mRNA"/>
</dbReference>
<dbReference type="CCDS" id="CCDS56676.1">
    <molecule id="A6H630-1"/>
</dbReference>
<dbReference type="RefSeq" id="NP_077223.2">
    <molecule id="A6H630-1"/>
    <property type="nucleotide sequence ID" value="NM_024261.2"/>
</dbReference>
<dbReference type="SMR" id="A6H630"/>
<dbReference type="FunCoup" id="A6H630">
    <property type="interactions" value="369"/>
</dbReference>
<dbReference type="STRING" id="10090.ENSMUSP00000093581"/>
<dbReference type="GlyGen" id="A6H630">
    <property type="glycosylation" value="1 site, 1 O-linked glycan (1 site)"/>
</dbReference>
<dbReference type="iPTMnet" id="A6H630"/>
<dbReference type="PhosphoSitePlus" id="A6H630"/>
<dbReference type="SwissPalm" id="A6H630"/>
<dbReference type="jPOST" id="A6H630"/>
<dbReference type="PaxDb" id="10090-ENSMUSP00000093581"/>
<dbReference type="PeptideAtlas" id="A6H630"/>
<dbReference type="ProteomicsDB" id="283166">
    <molecule id="A6H630-1"/>
</dbReference>
<dbReference type="ProteomicsDB" id="283167">
    <molecule id="A6H630-2"/>
</dbReference>
<dbReference type="ProteomicsDB" id="283168">
    <molecule id="A6H630-3"/>
</dbReference>
<dbReference type="ProteomicsDB" id="283169">
    <molecule id="A6H630-4"/>
</dbReference>
<dbReference type="Pumba" id="A6H630"/>
<dbReference type="Antibodypedia" id="1089">
    <property type="antibodies" value="158 antibodies from 24 providers"/>
</dbReference>
<dbReference type="DNASU" id="73419"/>
<dbReference type="Ensembl" id="ENSMUST00000095893.11">
    <molecule id="A6H630-1"/>
    <property type="protein sequence ID" value="ENSMUSP00000093581.5"/>
    <property type="gene ID" value="ENSMUSG00000061759.16"/>
</dbReference>
<dbReference type="Ensembl" id="ENSMUST00000117489.8">
    <molecule id="A6H630-4"/>
    <property type="protein sequence ID" value="ENSMUSP00000114025.2"/>
    <property type="gene ID" value="ENSMUSG00000061759.16"/>
</dbReference>
<dbReference type="Ensembl" id="ENSMUST00000118544.8">
    <molecule id="A6H630-2"/>
    <property type="protein sequence ID" value="ENSMUSP00000114073.2"/>
    <property type="gene ID" value="ENSMUSG00000061759.16"/>
</dbReference>
<dbReference type="GeneID" id="73419"/>
<dbReference type="KEGG" id="mmu:73419"/>
<dbReference type="UCSC" id="uc007egy.1">
    <molecule id="A6H630-1"/>
    <property type="organism name" value="mouse"/>
</dbReference>
<dbReference type="UCSC" id="uc007egz.1">
    <molecule id="A6H630-2"/>
    <property type="organism name" value="mouse"/>
</dbReference>
<dbReference type="UCSC" id="uc007ehb.1">
    <molecule id="A6H630-4"/>
    <property type="organism name" value="mouse"/>
</dbReference>
<dbReference type="AGR" id="MGI:1920669"/>
<dbReference type="CTD" id="79624"/>
<dbReference type="MGI" id="MGI:1920669">
    <property type="gene designation" value="Armt1"/>
</dbReference>
<dbReference type="VEuPathDB" id="HostDB:ENSMUSG00000061759"/>
<dbReference type="eggNOG" id="KOG3870">
    <property type="taxonomic scope" value="Eukaryota"/>
</dbReference>
<dbReference type="GeneTree" id="ENSGT00530000064023"/>
<dbReference type="HOGENOM" id="CLU_030117_0_0_1"/>
<dbReference type="InParanoid" id="A6H630"/>
<dbReference type="OMA" id="IFARQKM"/>
<dbReference type="OrthoDB" id="541375at2759"/>
<dbReference type="PhylomeDB" id="A6H630"/>
<dbReference type="TreeFam" id="TF314853"/>
<dbReference type="BioGRID-ORCS" id="73419">
    <property type="hits" value="1 hit in 76 CRISPR screens"/>
</dbReference>
<dbReference type="ChiTaRS" id="Armt1">
    <property type="organism name" value="mouse"/>
</dbReference>
<dbReference type="PRO" id="PR:A6H630"/>
<dbReference type="Proteomes" id="UP000000589">
    <property type="component" value="Chromosome 10"/>
</dbReference>
<dbReference type="RNAct" id="A6H630">
    <property type="molecule type" value="protein"/>
</dbReference>
<dbReference type="Bgee" id="ENSMUSG00000061759">
    <property type="expression patterns" value="Expressed in spermatocyte and 248 other cell types or tissues"/>
</dbReference>
<dbReference type="ExpressionAtlas" id="A6H630">
    <property type="expression patterns" value="baseline and differential"/>
</dbReference>
<dbReference type="GO" id="GO:0019899">
    <property type="term" value="F:enzyme binding"/>
    <property type="evidence" value="ECO:0007669"/>
    <property type="project" value="Ensembl"/>
</dbReference>
<dbReference type="GO" id="GO:0097023">
    <property type="term" value="F:fructose 6-phosphate aldolase activity"/>
    <property type="evidence" value="ECO:0007669"/>
    <property type="project" value="RHEA"/>
</dbReference>
<dbReference type="GO" id="GO:0103026">
    <property type="term" value="F:fructose-1-phosphatase activity"/>
    <property type="evidence" value="ECO:0007669"/>
    <property type="project" value="RHEA"/>
</dbReference>
<dbReference type="GO" id="GO:0046872">
    <property type="term" value="F:metal ion binding"/>
    <property type="evidence" value="ECO:0007669"/>
    <property type="project" value="UniProtKB-KW"/>
</dbReference>
<dbReference type="GO" id="GO:0051998">
    <property type="term" value="F:protein carboxyl O-methyltransferase activity"/>
    <property type="evidence" value="ECO:0000250"/>
    <property type="project" value="UniProtKB"/>
</dbReference>
<dbReference type="GO" id="GO:0008983">
    <property type="term" value="F:protein-glutamate O-methyltransferase activity"/>
    <property type="evidence" value="ECO:0007669"/>
    <property type="project" value="RHEA"/>
</dbReference>
<dbReference type="GO" id="GO:0008757">
    <property type="term" value="F:S-adenosylmethionine-dependent methyltransferase activity"/>
    <property type="evidence" value="ECO:0000250"/>
    <property type="project" value="UniProtKB"/>
</dbReference>
<dbReference type="GO" id="GO:0006974">
    <property type="term" value="P:DNA damage response"/>
    <property type="evidence" value="ECO:0000250"/>
    <property type="project" value="UniProtKB"/>
</dbReference>
<dbReference type="GO" id="GO:0032259">
    <property type="term" value="P:methylation"/>
    <property type="evidence" value="ECO:0007669"/>
    <property type="project" value="UniProtKB-KW"/>
</dbReference>
<dbReference type="FunFam" id="3.40.50.10880:FF:000002">
    <property type="entry name" value="Acidic residue methyltransferase 1"/>
    <property type="match status" value="1"/>
</dbReference>
<dbReference type="FunFam" id="1.20.930.60:FF:000001">
    <property type="entry name" value="protein-glutamate O-methyltransferase isoform X1"/>
    <property type="match status" value="1"/>
</dbReference>
<dbReference type="Gene3D" id="1.20.930.60">
    <property type="match status" value="1"/>
</dbReference>
<dbReference type="Gene3D" id="3.40.50.10880">
    <property type="entry name" value="Uncharacterised protein PF01937, DUF89, domain 3"/>
    <property type="match status" value="1"/>
</dbReference>
<dbReference type="InterPro" id="IPR036075">
    <property type="entry name" value="ARMT-1-like_metal-bd_sf"/>
</dbReference>
<dbReference type="InterPro" id="IPR039763">
    <property type="entry name" value="ARMT1"/>
</dbReference>
<dbReference type="InterPro" id="IPR002791">
    <property type="entry name" value="ARMT1-like_metal-bd"/>
</dbReference>
<dbReference type="PANTHER" id="PTHR12260">
    <property type="entry name" value="DAMAGE-CONTROL PHOSPHATASE ARMT1"/>
    <property type="match status" value="1"/>
</dbReference>
<dbReference type="PANTHER" id="PTHR12260:SF6">
    <property type="entry name" value="DAMAGE-CONTROL PHOSPHATASE ARMT1"/>
    <property type="match status" value="1"/>
</dbReference>
<dbReference type="Pfam" id="PF01937">
    <property type="entry name" value="ARMT1-like_dom"/>
    <property type="match status" value="1"/>
</dbReference>
<dbReference type="SUPFAM" id="SSF111321">
    <property type="entry name" value="AF1104-like"/>
    <property type="match status" value="1"/>
</dbReference>
<gene>
    <name evidence="3" type="primary">Armt1</name>
</gene>
<protein>
    <recommendedName>
        <fullName evidence="1">Damage-control phosphatase ARMT1</fullName>
        <ecNumber evidence="1">3.1.3.-</ecNumber>
    </recommendedName>
    <alternativeName>
        <fullName evidence="3">Acidic residue methyltransferase 1</fullName>
    </alternativeName>
    <alternativeName>
        <fullName evidence="3">Protein-glutamate O-methyltransferase</fullName>
        <ecNumber evidence="3">2.1.1.-</ecNumber>
    </alternativeName>
    <alternativeName>
        <fullName evidence="1">Sugar phosphate phosphatase ARMT1</fullName>
    </alternativeName>
</protein>
<keyword id="KW-0007">Acetylation</keyword>
<keyword id="KW-0025">Alternative splicing</keyword>
<keyword id="KW-0227">DNA damage</keyword>
<keyword id="KW-0378">Hydrolase</keyword>
<keyword id="KW-0464">Manganese</keyword>
<keyword id="KW-0479">Metal-binding</keyword>
<keyword id="KW-0489">Methyltransferase</keyword>
<keyword id="KW-0533">Nickel</keyword>
<keyword id="KW-0597">Phosphoprotein</keyword>
<keyword id="KW-1185">Reference proteome</keyword>
<keyword id="KW-0949">S-adenosyl-L-methionine</keyword>
<keyword id="KW-0808">Transferase</keyword>
<accession>A6H630</accession>
<accession>Q499H1</accession>
<accession>Q99M05</accession>
<accession>Q9D9L4</accession>
<organism>
    <name type="scientific">Mus musculus</name>
    <name type="common">Mouse</name>
    <dbReference type="NCBI Taxonomy" id="10090"/>
    <lineage>
        <taxon>Eukaryota</taxon>
        <taxon>Metazoa</taxon>
        <taxon>Chordata</taxon>
        <taxon>Craniata</taxon>
        <taxon>Vertebrata</taxon>
        <taxon>Euteleostomi</taxon>
        <taxon>Mammalia</taxon>
        <taxon>Eutheria</taxon>
        <taxon>Euarchontoglires</taxon>
        <taxon>Glires</taxon>
        <taxon>Rodentia</taxon>
        <taxon>Myomorpha</taxon>
        <taxon>Muroidea</taxon>
        <taxon>Muridae</taxon>
        <taxon>Murinae</taxon>
        <taxon>Mus</taxon>
        <taxon>Mus</taxon>
    </lineage>
</organism>
<feature type="initiator methionine" description="Removed" evidence="3">
    <location>
        <position position="1"/>
    </location>
</feature>
<feature type="chain" id="PRO_0000358925" description="Damage-control phosphatase ARMT1">
    <location>
        <begin position="2"/>
        <end position="439"/>
    </location>
</feature>
<feature type="short sequence motif" description="Subfamily III RTxK motif" evidence="1">
    <location>
        <begin position="399"/>
        <end position="402"/>
    </location>
</feature>
<feature type="binding site" evidence="1">
    <location>
        <begin position="251"/>
        <end position="252"/>
    </location>
    <ligand>
        <name>substrate</name>
    </ligand>
</feature>
<feature type="binding site" evidence="1">
    <location>
        <position position="251"/>
    </location>
    <ligand>
        <name>Mn(2+)</name>
        <dbReference type="ChEBI" id="CHEBI:29035"/>
        <note>catalytic</note>
    </ligand>
</feature>
<feature type="binding site" evidence="1">
    <location>
        <position position="252"/>
    </location>
    <ligand>
        <name>Mn(2+)</name>
        <dbReference type="ChEBI" id="CHEBI:29035"/>
        <note>catalytic</note>
    </ligand>
</feature>
<feature type="binding site" evidence="3">
    <location>
        <position position="256"/>
    </location>
    <ligand>
        <name>S-adenosyl-L-methionine</name>
        <dbReference type="ChEBI" id="CHEBI:59789"/>
    </ligand>
</feature>
<feature type="binding site" evidence="1">
    <location>
        <position position="289"/>
    </location>
    <ligand>
        <name>Mn(2+)</name>
        <dbReference type="ChEBI" id="CHEBI:29035"/>
        <note>catalytic</note>
    </ligand>
</feature>
<feature type="binding site" evidence="3">
    <location>
        <position position="289"/>
    </location>
    <ligand>
        <name>S-adenosyl-L-methionine</name>
        <dbReference type="ChEBI" id="CHEBI:59789"/>
    </ligand>
</feature>
<feature type="binding site" evidence="1">
    <location>
        <begin position="365"/>
        <end position="369"/>
    </location>
    <ligand>
        <name>substrate</name>
    </ligand>
</feature>
<feature type="binding site" evidence="1">
    <location>
        <position position="402"/>
    </location>
    <ligand>
        <name>substrate</name>
    </ligand>
</feature>
<feature type="modified residue" description="N-acetylalanine" evidence="3">
    <location>
        <position position="2"/>
    </location>
</feature>
<feature type="modified residue" description="Phosphoserine" evidence="2">
    <location>
        <position position="4"/>
    </location>
</feature>
<feature type="modified residue" description="N6-acetyllysine" evidence="3">
    <location>
        <position position="40"/>
    </location>
</feature>
<feature type="splice variant" id="VSP_036133" description="In isoform 3." evidence="5">
    <original>MAESPAFLSAKDEG</original>
    <variation>MLW</variation>
    <location>
        <begin position="1"/>
        <end position="14"/>
    </location>
</feature>
<feature type="splice variant" id="VSP_036134" description="In isoform 4." evidence="4">
    <original>SPPIHD</original>
    <variation>RQVYSQ</variation>
    <location>
        <begin position="131"/>
        <end position="136"/>
    </location>
</feature>
<feature type="splice variant" id="VSP_036135" description="In isoform 3." evidence="5">
    <original>SP</original>
    <variation>RF</variation>
    <location>
        <begin position="131"/>
        <end position="132"/>
    </location>
</feature>
<feature type="splice variant" id="VSP_036136" description="In isoform 3." evidence="5">
    <location>
        <begin position="133"/>
        <end position="439"/>
    </location>
</feature>
<feature type="splice variant" id="VSP_036137" description="In isoform 4." evidence="4">
    <location>
        <begin position="137"/>
        <end position="439"/>
    </location>
</feature>
<feature type="splice variant" id="VSP_036138" description="In isoform 2." evidence="4">
    <original>ISLWGNKCDLSLSGGESSSQKAN</original>
    <variation>VYKEYSTQDPMQPRRVMQTVTLQ</variation>
    <location>
        <begin position="186"/>
        <end position="208"/>
    </location>
</feature>
<feature type="splice variant" id="VSP_036139" description="In isoform 2." evidence="4">
    <location>
        <begin position="209"/>
        <end position="439"/>
    </location>
</feature>
<reference key="1">
    <citation type="journal article" date="2005" name="Science">
        <title>The transcriptional landscape of the mammalian genome.</title>
        <authorList>
            <person name="Carninci P."/>
            <person name="Kasukawa T."/>
            <person name="Katayama S."/>
            <person name="Gough J."/>
            <person name="Frith M.C."/>
            <person name="Maeda N."/>
            <person name="Oyama R."/>
            <person name="Ravasi T."/>
            <person name="Lenhard B."/>
            <person name="Wells C."/>
            <person name="Kodzius R."/>
            <person name="Shimokawa K."/>
            <person name="Bajic V.B."/>
            <person name="Brenner S.E."/>
            <person name="Batalov S."/>
            <person name="Forrest A.R."/>
            <person name="Zavolan M."/>
            <person name="Davis M.J."/>
            <person name="Wilming L.G."/>
            <person name="Aidinis V."/>
            <person name="Allen J.E."/>
            <person name="Ambesi-Impiombato A."/>
            <person name="Apweiler R."/>
            <person name="Aturaliya R.N."/>
            <person name="Bailey T.L."/>
            <person name="Bansal M."/>
            <person name="Baxter L."/>
            <person name="Beisel K.W."/>
            <person name="Bersano T."/>
            <person name="Bono H."/>
            <person name="Chalk A.M."/>
            <person name="Chiu K.P."/>
            <person name="Choudhary V."/>
            <person name="Christoffels A."/>
            <person name="Clutterbuck D.R."/>
            <person name="Crowe M.L."/>
            <person name="Dalla E."/>
            <person name="Dalrymple B.P."/>
            <person name="de Bono B."/>
            <person name="Della Gatta G."/>
            <person name="di Bernardo D."/>
            <person name="Down T."/>
            <person name="Engstrom P."/>
            <person name="Fagiolini M."/>
            <person name="Faulkner G."/>
            <person name="Fletcher C.F."/>
            <person name="Fukushima T."/>
            <person name="Furuno M."/>
            <person name="Futaki S."/>
            <person name="Gariboldi M."/>
            <person name="Georgii-Hemming P."/>
            <person name="Gingeras T.R."/>
            <person name="Gojobori T."/>
            <person name="Green R.E."/>
            <person name="Gustincich S."/>
            <person name="Harbers M."/>
            <person name="Hayashi Y."/>
            <person name="Hensch T.K."/>
            <person name="Hirokawa N."/>
            <person name="Hill D."/>
            <person name="Huminiecki L."/>
            <person name="Iacono M."/>
            <person name="Ikeo K."/>
            <person name="Iwama A."/>
            <person name="Ishikawa T."/>
            <person name="Jakt M."/>
            <person name="Kanapin A."/>
            <person name="Katoh M."/>
            <person name="Kawasawa Y."/>
            <person name="Kelso J."/>
            <person name="Kitamura H."/>
            <person name="Kitano H."/>
            <person name="Kollias G."/>
            <person name="Krishnan S.P."/>
            <person name="Kruger A."/>
            <person name="Kummerfeld S.K."/>
            <person name="Kurochkin I.V."/>
            <person name="Lareau L.F."/>
            <person name="Lazarevic D."/>
            <person name="Lipovich L."/>
            <person name="Liu J."/>
            <person name="Liuni S."/>
            <person name="McWilliam S."/>
            <person name="Madan Babu M."/>
            <person name="Madera M."/>
            <person name="Marchionni L."/>
            <person name="Matsuda H."/>
            <person name="Matsuzawa S."/>
            <person name="Miki H."/>
            <person name="Mignone F."/>
            <person name="Miyake S."/>
            <person name="Morris K."/>
            <person name="Mottagui-Tabar S."/>
            <person name="Mulder N."/>
            <person name="Nakano N."/>
            <person name="Nakauchi H."/>
            <person name="Ng P."/>
            <person name="Nilsson R."/>
            <person name="Nishiguchi S."/>
            <person name="Nishikawa S."/>
            <person name="Nori F."/>
            <person name="Ohara O."/>
            <person name="Okazaki Y."/>
            <person name="Orlando V."/>
            <person name="Pang K.C."/>
            <person name="Pavan W.J."/>
            <person name="Pavesi G."/>
            <person name="Pesole G."/>
            <person name="Petrovsky N."/>
            <person name="Piazza S."/>
            <person name="Reed J."/>
            <person name="Reid J.F."/>
            <person name="Ring B.Z."/>
            <person name="Ringwald M."/>
            <person name="Rost B."/>
            <person name="Ruan Y."/>
            <person name="Salzberg S.L."/>
            <person name="Sandelin A."/>
            <person name="Schneider C."/>
            <person name="Schoenbach C."/>
            <person name="Sekiguchi K."/>
            <person name="Semple C.A."/>
            <person name="Seno S."/>
            <person name="Sessa L."/>
            <person name="Sheng Y."/>
            <person name="Shibata Y."/>
            <person name="Shimada H."/>
            <person name="Shimada K."/>
            <person name="Silva D."/>
            <person name="Sinclair B."/>
            <person name="Sperling S."/>
            <person name="Stupka E."/>
            <person name="Sugiura K."/>
            <person name="Sultana R."/>
            <person name="Takenaka Y."/>
            <person name="Taki K."/>
            <person name="Tammoja K."/>
            <person name="Tan S.L."/>
            <person name="Tang S."/>
            <person name="Taylor M.S."/>
            <person name="Tegner J."/>
            <person name="Teichmann S.A."/>
            <person name="Ueda H.R."/>
            <person name="van Nimwegen E."/>
            <person name="Verardo R."/>
            <person name="Wei C.L."/>
            <person name="Yagi K."/>
            <person name="Yamanishi H."/>
            <person name="Zabarovsky E."/>
            <person name="Zhu S."/>
            <person name="Zimmer A."/>
            <person name="Hide W."/>
            <person name="Bult C."/>
            <person name="Grimmond S.M."/>
            <person name="Teasdale R.D."/>
            <person name="Liu E.T."/>
            <person name="Brusic V."/>
            <person name="Quackenbush J."/>
            <person name="Wahlestedt C."/>
            <person name="Mattick J.S."/>
            <person name="Hume D.A."/>
            <person name="Kai C."/>
            <person name="Sasaki D."/>
            <person name="Tomaru Y."/>
            <person name="Fukuda S."/>
            <person name="Kanamori-Katayama M."/>
            <person name="Suzuki M."/>
            <person name="Aoki J."/>
            <person name="Arakawa T."/>
            <person name="Iida J."/>
            <person name="Imamura K."/>
            <person name="Itoh M."/>
            <person name="Kato T."/>
            <person name="Kawaji H."/>
            <person name="Kawagashira N."/>
            <person name="Kawashima T."/>
            <person name="Kojima M."/>
            <person name="Kondo S."/>
            <person name="Konno H."/>
            <person name="Nakano K."/>
            <person name="Ninomiya N."/>
            <person name="Nishio T."/>
            <person name="Okada M."/>
            <person name="Plessy C."/>
            <person name="Shibata K."/>
            <person name="Shiraki T."/>
            <person name="Suzuki S."/>
            <person name="Tagami M."/>
            <person name="Waki K."/>
            <person name="Watahiki A."/>
            <person name="Okamura-Oho Y."/>
            <person name="Suzuki H."/>
            <person name="Kawai J."/>
            <person name="Hayashizaki Y."/>
        </authorList>
    </citation>
    <scope>NUCLEOTIDE SEQUENCE [LARGE SCALE MRNA] (ISOFORM 3)</scope>
    <source>
        <strain>C57BL/6J</strain>
        <tissue>Testis</tissue>
    </source>
</reference>
<reference key="2">
    <citation type="journal article" date="2009" name="PLoS Biol.">
        <title>Lineage-specific biology revealed by a finished genome assembly of the mouse.</title>
        <authorList>
            <person name="Church D.M."/>
            <person name="Goodstadt L."/>
            <person name="Hillier L.W."/>
            <person name="Zody M.C."/>
            <person name="Goldstein S."/>
            <person name="She X."/>
            <person name="Bult C.J."/>
            <person name="Agarwala R."/>
            <person name="Cherry J.L."/>
            <person name="DiCuccio M."/>
            <person name="Hlavina W."/>
            <person name="Kapustin Y."/>
            <person name="Meric P."/>
            <person name="Maglott D."/>
            <person name="Birtle Z."/>
            <person name="Marques A.C."/>
            <person name="Graves T."/>
            <person name="Zhou S."/>
            <person name="Teague B."/>
            <person name="Potamousis K."/>
            <person name="Churas C."/>
            <person name="Place M."/>
            <person name="Herschleb J."/>
            <person name="Runnheim R."/>
            <person name="Forrest D."/>
            <person name="Amos-Landgraf J."/>
            <person name="Schwartz D.C."/>
            <person name="Cheng Z."/>
            <person name="Lindblad-Toh K."/>
            <person name="Eichler E.E."/>
            <person name="Ponting C.P."/>
        </authorList>
    </citation>
    <scope>NUCLEOTIDE SEQUENCE [LARGE SCALE GENOMIC DNA]</scope>
    <source>
        <strain>C57BL/6J</strain>
    </source>
</reference>
<reference key="3">
    <citation type="submission" date="2007-06" db="EMBL/GenBank/DDBJ databases">
        <authorList>
            <person name="Mural R.J."/>
            <person name="Adams M.D."/>
            <person name="Myers E.W."/>
            <person name="Smith H.O."/>
            <person name="Venter J.C."/>
        </authorList>
    </citation>
    <scope>NUCLEOTIDE SEQUENCE [LARGE SCALE GENOMIC DNA]</scope>
</reference>
<reference key="4">
    <citation type="journal article" date="2004" name="Genome Res.">
        <title>The status, quality, and expansion of the NIH full-length cDNA project: the Mammalian Gene Collection (MGC).</title>
        <authorList>
            <consortium name="The MGC Project Team"/>
        </authorList>
    </citation>
    <scope>NUCLEOTIDE SEQUENCE [LARGE SCALE MRNA] (ISOFORMS 1; 2 AND 4)</scope>
    <source>
        <strain>C57BL/6J</strain>
        <tissue>Brain</tissue>
        <tissue>Mammary tumor</tissue>
    </source>
</reference>
<reference key="5">
    <citation type="journal article" date="2010" name="Cell">
        <title>A tissue-specific atlas of mouse protein phosphorylation and expression.</title>
        <authorList>
            <person name="Huttlin E.L."/>
            <person name="Jedrychowski M.P."/>
            <person name="Elias J.E."/>
            <person name="Goswami T."/>
            <person name="Rad R."/>
            <person name="Beausoleil S.A."/>
            <person name="Villen J."/>
            <person name="Haas W."/>
            <person name="Sowa M.E."/>
            <person name="Gygi S.P."/>
        </authorList>
    </citation>
    <scope>IDENTIFICATION BY MASS SPECTROMETRY [LARGE SCALE ANALYSIS]</scope>
    <source>
        <tissue>Brown adipose tissue</tissue>
        <tissue>Spleen</tissue>
        <tissue>Testis</tissue>
    </source>
</reference>